<keyword id="KW-0119">Carbohydrate metabolism</keyword>
<keyword id="KW-0963">Cytoplasm</keyword>
<keyword id="KW-0328">Glycosyltransferase</keyword>
<keyword id="KW-0808">Transferase</keyword>
<dbReference type="EC" id="2.4.1.25"/>
<dbReference type="EMBL" id="L37874">
    <property type="protein sequence ID" value="AAB84229.1"/>
    <property type="molecule type" value="Genomic_DNA"/>
</dbReference>
<dbReference type="SMR" id="Q59266"/>
<dbReference type="CAZy" id="GH77">
    <property type="family name" value="Glycoside Hydrolase Family 77"/>
</dbReference>
<dbReference type="BRENDA" id="2.4.1.25">
    <property type="organism ID" value="1465"/>
</dbReference>
<dbReference type="GO" id="GO:0005737">
    <property type="term" value="C:cytoplasm"/>
    <property type="evidence" value="ECO:0007669"/>
    <property type="project" value="UniProtKB-SubCell"/>
</dbReference>
<dbReference type="GO" id="GO:0004134">
    <property type="term" value="F:4-alpha-glucanotransferase activity"/>
    <property type="evidence" value="ECO:0007669"/>
    <property type="project" value="UniProtKB-EC"/>
</dbReference>
<dbReference type="GO" id="GO:0016757">
    <property type="term" value="F:glycosyltransferase activity"/>
    <property type="evidence" value="ECO:0000314"/>
    <property type="project" value="CACAO"/>
</dbReference>
<dbReference type="GO" id="GO:0005975">
    <property type="term" value="P:carbohydrate metabolic process"/>
    <property type="evidence" value="ECO:0007669"/>
    <property type="project" value="InterPro"/>
</dbReference>
<dbReference type="FunFam" id="3.20.20.80:FF:000193">
    <property type="entry name" value="4-alpha-glucanotransferase, chloroplastic/amyloplastic"/>
    <property type="match status" value="1"/>
</dbReference>
<dbReference type="Gene3D" id="3.20.20.80">
    <property type="entry name" value="Glycosidases"/>
    <property type="match status" value="1"/>
</dbReference>
<dbReference type="InterPro" id="IPR003385">
    <property type="entry name" value="Glyco_hydro_77"/>
</dbReference>
<dbReference type="InterPro" id="IPR017853">
    <property type="entry name" value="Glycoside_hydrolase_SF"/>
</dbReference>
<dbReference type="NCBIfam" id="TIGR00217">
    <property type="entry name" value="malQ"/>
    <property type="match status" value="1"/>
</dbReference>
<dbReference type="NCBIfam" id="NF011080">
    <property type="entry name" value="PRK14508.1-3"/>
    <property type="match status" value="1"/>
</dbReference>
<dbReference type="PANTHER" id="PTHR32438">
    <property type="entry name" value="4-ALPHA-GLUCANOTRANSFERASE DPE1, CHLOROPLASTIC/AMYLOPLASTIC"/>
    <property type="match status" value="1"/>
</dbReference>
<dbReference type="PANTHER" id="PTHR32438:SF5">
    <property type="entry name" value="4-ALPHA-GLUCANOTRANSFERASE DPE1, CHLOROPLASTIC_AMYLOPLASTIC"/>
    <property type="match status" value="1"/>
</dbReference>
<dbReference type="Pfam" id="PF02446">
    <property type="entry name" value="Glyco_hydro_77"/>
    <property type="match status" value="1"/>
</dbReference>
<dbReference type="SUPFAM" id="SSF51445">
    <property type="entry name" value="(Trans)glycosidases"/>
    <property type="match status" value="1"/>
</dbReference>
<organism>
    <name type="scientific">Clostridium butyricum</name>
    <dbReference type="NCBI Taxonomy" id="1492"/>
    <lineage>
        <taxon>Bacteria</taxon>
        <taxon>Bacillati</taxon>
        <taxon>Bacillota</taxon>
        <taxon>Clostridia</taxon>
        <taxon>Eubacteriales</taxon>
        <taxon>Clostridiaceae</taxon>
        <taxon>Clostridium</taxon>
    </lineage>
</organism>
<protein>
    <recommendedName>
        <fullName>4-alpha-glucanotransferase</fullName>
        <ecNumber>2.4.1.25</ecNumber>
    </recommendedName>
    <alternativeName>
        <fullName>Amylomaltase</fullName>
    </alternativeName>
    <alternativeName>
        <fullName>Disproportionating enzyme</fullName>
        <shortName>D-enzyme</shortName>
    </alternativeName>
</protein>
<gene>
    <name type="primary">malQ</name>
</gene>
<feature type="chain" id="PRO_0000170124" description="4-alpha-glucanotransferase">
    <location>
        <begin position="1"/>
        <end position="487"/>
    </location>
</feature>
<evidence type="ECO:0000250" key="1"/>
<evidence type="ECO:0000305" key="2"/>
<accession>Q59266</accession>
<reference key="1">
    <citation type="journal article" date="1997" name="Microbiology">
        <title>Molecular analysis of a Clostridium butyricum NCIMB 7423 gene encoding 4-alpha-glucanotransferase and characterization of the recombinant enzyme produced in Escherichia coli.</title>
        <authorList>
            <person name="Goda S.K."/>
            <person name="Eissa O."/>
            <person name="Akhtar M."/>
            <person name="Minton N.P."/>
        </authorList>
    </citation>
    <scope>NUCLEOTIDE SEQUENCE [GENOMIC DNA]</scope>
    <scope>CHARACTERIZATION</scope>
    <source>
        <strain>ATCC 19398 / DSM 10702 / JCM 1391 / NCIMB 7423</strain>
    </source>
</reference>
<proteinExistence type="evidence at protein level"/>
<sequence>MHISSLPGKYGIGTFGRSAYEFCDFLEKAGQKYWQILPLGQTSYGDSPYQSFSAFAGNPYFIDLDILNEKNLLDKDDYEEKNFGDNKEMINYGLIFNEKMKVLRKAYMNFNSKDDESFAKFIEDEKKWLDDYSLFMALKYKFNFISWNSWNKDIKLRKNEEIEKYKDELKEDVNYWKFLQYEFFSQWKNLKDYANKKNIKIIGDIPIYIAQDSSDVWSNPDIFLLNKETLEPLKVSGCPPDAFSETGQLWGNPIYDWGYLEKTNFEWWVDRIKSSLKLYDILRIDHFRGFEAYWSVDYGEKTAQNGKWIKGPEMKLFNVIKEKIGDIEIIAEDLGYLTEETLEFKKRTGFPGMKIIQFAFGGDSSNPYLPHNYEKNCVAYTGTHDNDTVRGWFEVTGSKEEKEKAVEYFKLTEEEGYNWGVIRGVWSSVANTSIGVMQDFLNLGNEARINKPSTLASNWSWRAKDNVFTNELANKIYRLTRIYGRCE</sequence>
<name>MALQ_CLOBU</name>
<comment type="function">
    <text>Catalyzes a disproportionation reaction in which single or multiple glucose units from oligosaccharides are transferred to the 4-hydroxyl group of acceptor sugars. Glucose, maltose and maltotriose can act as acceptor, whereas of the three only maltotriose can act as donor.</text>
</comment>
<comment type="catalytic activity">
    <reaction>
        <text>Transfers a segment of a (1-&gt;4)-alpha-D-glucan to a new position in an acceptor, which may be glucose or a (1-&gt;4)-alpha-D-glucan.</text>
        <dbReference type="EC" id="2.4.1.25"/>
    </reaction>
</comment>
<comment type="subcellular location">
    <subcellularLocation>
        <location evidence="1">Cytoplasm</location>
    </subcellularLocation>
</comment>
<comment type="similarity">
    <text evidence="2">Belongs to the disproportionating enzyme family.</text>
</comment>